<proteinExistence type="inferred from homology"/>
<accession>Q57617</accession>
<sequence>MVMGNNVEMDIKKLLTPLVKMKNANISMSIKFGEEEEEEWEPMGPTPMPKIPTLRHWDFKLLERYPPFYMPICDLCCLCTFGKCDLSRGKKGACGLNIKAQQARIVLIACCIGAACHAGHSRHLVHHLIETLGRDYPIDLGNEIEVEAPIARTVTGIKPKTLGDLEKILDYCEEQITHLLSAAHTGQEGDYLDFESKALHAGMIDDLAREAGDLAQIVAYNMPKGDEDAPLIELGFGCIDKSKPVILCIGHNVVPGSYILEYLEENSMEDEVEVCGICCTAIDITRVSDKPKVVGPLSRQLMFVRSGVADVVIVDEQCIRTDILEEVLKTGAVLIATNEKMCLGLEDVSHMDEDEIIGYLLRNRAALLLDEKKVGKVAVEVAKIVAKERKDRKTLPDLNEVVELAKQCTECGWCNRNCPNAFKVKEAMALAKQGNFKGFIDLYKRCYGCGRCEAICPRNLPIVSMTTKVGEAYYKDLKFKMRAGRGPIKDVEIRSVGAPIVFGDIPGVVALVGCSNHPNGEEEVAMIAKEFLERKYIVVATGCAAMAIGMWKDKDGKTLYEKYPGEFRAGGLVNCGSCLSNCHITGAAIKIANIFAKVPLRGNYAEVADYILNKVGAVGVAWGAMSQKAAAIATGVNRWGIPVILGPHGAKYRRLYLSNGEKFKVKDKKTGEILEIEPAPEHLIVTAENVKECICMIPKLCMRPNDTPKGRANKIYHYVDVYEKYFGRMPPDLEKFVRTEKDIPFMMKDKIMAYLEEKGWKPLEKYPQDPTILY</sequence>
<name>ACDA_METJA</name>
<dbReference type="EC" id="1.2.7.4" evidence="1"/>
<dbReference type="EMBL" id="L77117">
    <property type="protein sequence ID" value="AAB98135.1"/>
    <property type="molecule type" value="Genomic_DNA"/>
</dbReference>
<dbReference type="PIR" id="B64319">
    <property type="entry name" value="B64319"/>
</dbReference>
<dbReference type="RefSeq" id="WP_010869648.1">
    <property type="nucleotide sequence ID" value="NC_000909.1"/>
</dbReference>
<dbReference type="SMR" id="Q57617"/>
<dbReference type="FunCoup" id="Q57617">
    <property type="interactions" value="90"/>
</dbReference>
<dbReference type="STRING" id="243232.MJ_0153"/>
<dbReference type="PaxDb" id="243232-MJ_0153"/>
<dbReference type="EnsemblBacteria" id="AAB98135">
    <property type="protein sequence ID" value="AAB98135"/>
    <property type="gene ID" value="MJ_0153"/>
</dbReference>
<dbReference type="GeneID" id="1450997"/>
<dbReference type="KEGG" id="mja:MJ_0153"/>
<dbReference type="eggNOG" id="arCOG02428">
    <property type="taxonomic scope" value="Archaea"/>
</dbReference>
<dbReference type="HOGENOM" id="CLU_361186_0_0_2"/>
<dbReference type="InParanoid" id="Q57617"/>
<dbReference type="OrthoDB" id="35334at2157"/>
<dbReference type="PhylomeDB" id="Q57617"/>
<dbReference type="Proteomes" id="UP000000805">
    <property type="component" value="Chromosome"/>
</dbReference>
<dbReference type="GO" id="GO:0051539">
    <property type="term" value="F:4 iron, 4 sulfur cluster binding"/>
    <property type="evidence" value="ECO:0007669"/>
    <property type="project" value="UniProtKB-KW"/>
</dbReference>
<dbReference type="GO" id="GO:0043885">
    <property type="term" value="F:anaerobic carbon-monoxide dehydrogenase activity"/>
    <property type="evidence" value="ECO:0007669"/>
    <property type="project" value="UniProtKB-UniRule"/>
</dbReference>
<dbReference type="GO" id="GO:0050418">
    <property type="term" value="F:hydroxylamine reductase activity"/>
    <property type="evidence" value="ECO:0000318"/>
    <property type="project" value="GO_Central"/>
</dbReference>
<dbReference type="GO" id="GO:0005506">
    <property type="term" value="F:iron ion binding"/>
    <property type="evidence" value="ECO:0007669"/>
    <property type="project" value="UniProtKB-UniRule"/>
</dbReference>
<dbReference type="GO" id="GO:0016151">
    <property type="term" value="F:nickel cation binding"/>
    <property type="evidence" value="ECO:0007669"/>
    <property type="project" value="UniProtKB-UniRule"/>
</dbReference>
<dbReference type="GO" id="GO:0004601">
    <property type="term" value="F:peroxidase activity"/>
    <property type="evidence" value="ECO:0000318"/>
    <property type="project" value="GO_Central"/>
</dbReference>
<dbReference type="GO" id="GO:0006084">
    <property type="term" value="P:acetyl-CoA metabolic process"/>
    <property type="evidence" value="ECO:0007669"/>
    <property type="project" value="InterPro"/>
</dbReference>
<dbReference type="GO" id="GO:0046210">
    <property type="term" value="P:nitric oxide catabolic process"/>
    <property type="evidence" value="ECO:0000318"/>
    <property type="project" value="GO_Central"/>
</dbReference>
<dbReference type="GO" id="GO:0042542">
    <property type="term" value="P:response to hydrogen peroxide"/>
    <property type="evidence" value="ECO:0000318"/>
    <property type="project" value="GO_Central"/>
</dbReference>
<dbReference type="CDD" id="cd01916">
    <property type="entry name" value="ACS_1"/>
    <property type="match status" value="1"/>
</dbReference>
<dbReference type="Gene3D" id="3.30.70.20">
    <property type="match status" value="1"/>
</dbReference>
<dbReference type="Gene3D" id="3.40.50.2030">
    <property type="match status" value="2"/>
</dbReference>
<dbReference type="Gene3D" id="1.10.8.190">
    <property type="entry name" value="Carbon monoxide dehydrogenase alpha subunit. Chain M, domain 1"/>
    <property type="match status" value="1"/>
</dbReference>
<dbReference type="HAMAP" id="MF_01137">
    <property type="entry name" value="CdhA"/>
    <property type="match status" value="1"/>
</dbReference>
<dbReference type="InterPro" id="IPR017896">
    <property type="entry name" value="4Fe4S_Fe-S-bd"/>
</dbReference>
<dbReference type="InterPro" id="IPR017900">
    <property type="entry name" value="4Fe4S_Fe_S_CS"/>
</dbReference>
<dbReference type="InterPro" id="IPR004460">
    <property type="entry name" value="CdhA"/>
</dbReference>
<dbReference type="InterPro" id="IPR004137">
    <property type="entry name" value="HCP/CODH"/>
</dbReference>
<dbReference type="InterPro" id="IPR016099">
    <property type="entry name" value="Prismane-like_a/b-sand"/>
</dbReference>
<dbReference type="InterPro" id="IPR011254">
    <property type="entry name" value="Prismane-like_sf"/>
</dbReference>
<dbReference type="NCBIfam" id="TIGR00314">
    <property type="entry name" value="cdhA"/>
    <property type="match status" value="1"/>
</dbReference>
<dbReference type="PANTHER" id="PTHR30109:SF6">
    <property type="entry name" value="ACETYL-COA DECARBONYLASE_SYNTHASE COMPLEX SUBUNIT ALPHA"/>
    <property type="match status" value="1"/>
</dbReference>
<dbReference type="PANTHER" id="PTHR30109">
    <property type="entry name" value="HYDROXYLAMINE REDUCTASE"/>
    <property type="match status" value="1"/>
</dbReference>
<dbReference type="Pfam" id="PF12838">
    <property type="entry name" value="Fer4_7"/>
    <property type="match status" value="1"/>
</dbReference>
<dbReference type="Pfam" id="PF03063">
    <property type="entry name" value="Prismane"/>
    <property type="match status" value="2"/>
</dbReference>
<dbReference type="SUPFAM" id="SSF46548">
    <property type="entry name" value="alpha-helical ferredoxin"/>
    <property type="match status" value="1"/>
</dbReference>
<dbReference type="SUPFAM" id="SSF56821">
    <property type="entry name" value="Prismane protein-like"/>
    <property type="match status" value="1"/>
</dbReference>
<dbReference type="PROSITE" id="PS00198">
    <property type="entry name" value="4FE4S_FER_1"/>
    <property type="match status" value="2"/>
</dbReference>
<dbReference type="PROSITE" id="PS51379">
    <property type="entry name" value="4FE4S_FER_2"/>
    <property type="match status" value="2"/>
</dbReference>
<gene>
    <name evidence="1" type="primary">cdhA</name>
    <name type="ordered locus">MJ0153</name>
</gene>
<feature type="chain" id="PRO_0000155077" description="Acetyl-CoA decarbonylase/synthase complex subunit alpha">
    <location>
        <begin position="1"/>
        <end position="774"/>
    </location>
</feature>
<feature type="domain" description="4Fe-4S ferredoxin-type 1" evidence="1">
    <location>
        <begin position="398"/>
        <end position="427"/>
    </location>
</feature>
<feature type="domain" description="4Fe-4S ferredoxin-type 2" evidence="1">
    <location>
        <begin position="436"/>
        <end position="466"/>
    </location>
</feature>
<feature type="binding site" evidence="1">
    <location>
        <position position="73"/>
    </location>
    <ligand>
        <name>[4Fe-4S] cluster</name>
        <dbReference type="ChEBI" id="CHEBI:49883"/>
        <label>1</label>
        <note>ligand shared between dimeric partners</note>
    </ligand>
</feature>
<feature type="binding site" evidence="1">
    <location>
        <position position="76"/>
    </location>
    <ligand>
        <name>[4Fe-4S] cluster</name>
        <dbReference type="ChEBI" id="CHEBI:49883"/>
        <label>2</label>
    </ligand>
</feature>
<feature type="binding site" evidence="1">
    <location>
        <position position="77"/>
    </location>
    <ligand>
        <name>[4Fe-4S] cluster</name>
        <dbReference type="ChEBI" id="CHEBI:49883"/>
        <label>1</label>
        <note>ligand shared between dimeric partners</note>
    </ligand>
</feature>
<feature type="binding site" evidence="1">
    <location>
        <position position="79"/>
    </location>
    <ligand>
        <name>[4Fe-4S] cluster</name>
        <dbReference type="ChEBI" id="CHEBI:49883"/>
        <label>2</label>
    </ligand>
</feature>
<feature type="binding site" evidence="1">
    <location>
        <position position="84"/>
    </location>
    <ligand>
        <name>[4Fe-4S] cluster</name>
        <dbReference type="ChEBI" id="CHEBI:49883"/>
        <label>2</label>
    </ligand>
</feature>
<feature type="binding site" evidence="1">
    <location>
        <position position="94"/>
    </location>
    <ligand>
        <name>[4Fe-4S] cluster</name>
        <dbReference type="ChEBI" id="CHEBI:49883"/>
        <label>2</label>
    </ligand>
</feature>
<feature type="binding site" evidence="1">
    <location>
        <position position="117"/>
    </location>
    <ligand>
        <name>CO</name>
        <dbReference type="ChEBI" id="CHEBI:17245"/>
    </ligand>
</feature>
<feature type="binding site" evidence="1">
    <location>
        <position position="251"/>
    </location>
    <ligand>
        <name>[Ni-4Fe-4S] cluster</name>
        <dbReference type="ChEBI" id="CHEBI:47739"/>
    </ligand>
</feature>
<feature type="binding site" evidence="1">
    <location>
        <position position="279"/>
    </location>
    <ligand>
        <name>[Ni-4Fe-4S] cluster</name>
        <dbReference type="ChEBI" id="CHEBI:47739"/>
    </ligand>
</feature>
<feature type="binding site" evidence="1">
    <location>
        <position position="318"/>
    </location>
    <ligand>
        <name>[Ni-4Fe-4S] cluster</name>
        <dbReference type="ChEBI" id="CHEBI:47739"/>
    </ligand>
</feature>
<feature type="binding site" evidence="1">
    <location>
        <position position="408"/>
    </location>
    <ligand>
        <name>[4Fe-4S] cluster</name>
        <dbReference type="ChEBI" id="CHEBI:49883"/>
        <label>3</label>
    </ligand>
</feature>
<feature type="binding site" evidence="1">
    <location>
        <position position="411"/>
    </location>
    <ligand>
        <name>[4Fe-4S] cluster</name>
        <dbReference type="ChEBI" id="CHEBI:49883"/>
        <label>3</label>
    </ligand>
</feature>
<feature type="binding site" evidence="1">
    <location>
        <position position="414"/>
    </location>
    <ligand>
        <name>[4Fe-4S] cluster</name>
        <dbReference type="ChEBI" id="CHEBI:49883"/>
        <label>3</label>
    </ligand>
</feature>
<feature type="binding site" evidence="1">
    <location>
        <position position="418"/>
    </location>
    <ligand>
        <name>[4Fe-4S] cluster</name>
        <dbReference type="ChEBI" id="CHEBI:49883"/>
        <label>4</label>
    </ligand>
</feature>
<feature type="binding site" evidence="1">
    <location>
        <position position="446"/>
    </location>
    <ligand>
        <name>[4Fe-4S] cluster</name>
        <dbReference type="ChEBI" id="CHEBI:49883"/>
        <label>4</label>
    </ligand>
</feature>
<feature type="binding site" evidence="1">
    <location>
        <position position="449"/>
    </location>
    <ligand>
        <name>[4Fe-4S] cluster</name>
        <dbReference type="ChEBI" id="CHEBI:49883"/>
        <label>4</label>
    </ligand>
</feature>
<feature type="binding site" evidence="1">
    <location>
        <position position="452"/>
    </location>
    <ligand>
        <name>[4Fe-4S] cluster</name>
        <dbReference type="ChEBI" id="CHEBI:49883"/>
        <label>4</label>
    </ligand>
</feature>
<feature type="binding site" evidence="1">
    <location>
        <position position="456"/>
    </location>
    <ligand>
        <name>[4Fe-4S] cluster</name>
        <dbReference type="ChEBI" id="CHEBI:49883"/>
        <label>3</label>
    </ligand>
</feature>
<feature type="binding site" evidence="1">
    <location>
        <position position="514"/>
    </location>
    <ligand>
        <name>[Ni-4Fe-4S] cluster</name>
        <dbReference type="ChEBI" id="CHEBI:47739"/>
    </ligand>
</feature>
<feature type="binding site" evidence="1">
    <location>
        <position position="543"/>
    </location>
    <ligand>
        <name>[Ni-4Fe-4S] cluster</name>
        <dbReference type="ChEBI" id="CHEBI:47739"/>
    </ligand>
</feature>
<feature type="binding site" evidence="1">
    <location>
        <position position="578"/>
    </location>
    <ligand>
        <name>[Ni-4Fe-4S] cluster</name>
        <dbReference type="ChEBI" id="CHEBI:47739"/>
    </ligand>
</feature>
<protein>
    <recommendedName>
        <fullName evidence="1">Acetyl-CoA decarbonylase/synthase complex subunit alpha</fullName>
        <shortName evidence="1">ACDS complex subunit alpha</shortName>
        <ecNumber evidence="1">1.2.7.4</ecNumber>
    </recommendedName>
    <alternativeName>
        <fullName evidence="1">ACDS complex carbon monoxide dehydrogenase subunit alpha</fullName>
        <shortName evidence="1">ACDS CODH subunit alpha</shortName>
    </alternativeName>
</protein>
<reference key="1">
    <citation type="journal article" date="1996" name="Science">
        <title>Complete genome sequence of the methanogenic archaeon, Methanococcus jannaschii.</title>
        <authorList>
            <person name="Bult C.J."/>
            <person name="White O."/>
            <person name="Olsen G.J."/>
            <person name="Zhou L."/>
            <person name="Fleischmann R.D."/>
            <person name="Sutton G.G."/>
            <person name="Blake J.A."/>
            <person name="FitzGerald L.M."/>
            <person name="Clayton R.A."/>
            <person name="Gocayne J.D."/>
            <person name="Kerlavage A.R."/>
            <person name="Dougherty B.A."/>
            <person name="Tomb J.-F."/>
            <person name="Adams M.D."/>
            <person name="Reich C.I."/>
            <person name="Overbeek R."/>
            <person name="Kirkness E.F."/>
            <person name="Weinstock K.G."/>
            <person name="Merrick J.M."/>
            <person name="Glodek A."/>
            <person name="Scott J.L."/>
            <person name="Geoghagen N.S.M."/>
            <person name="Weidman J.F."/>
            <person name="Fuhrmann J.L."/>
            <person name="Nguyen D."/>
            <person name="Utterback T.R."/>
            <person name="Kelley J.M."/>
            <person name="Peterson J.D."/>
            <person name="Sadow P.W."/>
            <person name="Hanna M.C."/>
            <person name="Cotton M.D."/>
            <person name="Roberts K.M."/>
            <person name="Hurst M.A."/>
            <person name="Kaine B.P."/>
            <person name="Borodovsky M."/>
            <person name="Klenk H.-P."/>
            <person name="Fraser C.M."/>
            <person name="Smith H.O."/>
            <person name="Woese C.R."/>
            <person name="Venter J.C."/>
        </authorList>
    </citation>
    <scope>NUCLEOTIDE SEQUENCE [LARGE SCALE GENOMIC DNA]</scope>
    <source>
        <strain>ATCC 43067 / DSM 2661 / JAL-1 / JCM 10045 / NBRC 100440</strain>
    </source>
</reference>
<keyword id="KW-0004">4Fe-4S</keyword>
<keyword id="KW-0408">Iron</keyword>
<keyword id="KW-0411">Iron-sulfur</keyword>
<keyword id="KW-0479">Metal-binding</keyword>
<keyword id="KW-0533">Nickel</keyword>
<keyword id="KW-0560">Oxidoreductase</keyword>
<keyword id="KW-1185">Reference proteome</keyword>
<keyword id="KW-0677">Repeat</keyword>
<comment type="function">
    <text evidence="1">Part of the ACDS complex that catalyzes the reversible cleavage of acetyl-CoA, allowing autotrophic growth from CO(2). The alpha-epsilon subcomponent functions as a carbon monoxide dehydrogenase.</text>
</comment>
<comment type="catalytic activity">
    <reaction evidence="1">
        <text>CO + 2 oxidized [2Fe-2S]-[ferredoxin] + H2O = 2 reduced [2Fe-2S]-[ferredoxin] + CO2 + 2 H(+)</text>
        <dbReference type="Rhea" id="RHEA:21040"/>
        <dbReference type="Rhea" id="RHEA-COMP:10000"/>
        <dbReference type="Rhea" id="RHEA-COMP:10001"/>
        <dbReference type="ChEBI" id="CHEBI:15377"/>
        <dbReference type="ChEBI" id="CHEBI:15378"/>
        <dbReference type="ChEBI" id="CHEBI:16526"/>
        <dbReference type="ChEBI" id="CHEBI:17245"/>
        <dbReference type="ChEBI" id="CHEBI:33737"/>
        <dbReference type="ChEBI" id="CHEBI:33738"/>
        <dbReference type="EC" id="1.2.7.4"/>
    </reaction>
</comment>
<comment type="cofactor">
    <cofactor evidence="1">
        <name>[4Fe-4S] cluster</name>
        <dbReference type="ChEBI" id="CHEBI:49883"/>
    </cofactor>
    <text evidence="1">Binds 7 [4Fe-4S] clusters per heterotetramer.</text>
</comment>
<comment type="cofactor">
    <cofactor evidence="1">
        <name>[Ni-4Fe-4S] cluster</name>
        <dbReference type="ChEBI" id="CHEBI:47739"/>
    </cofactor>
    <text evidence="1">Binds 2 [Ni-4Fe-4S] clusters per heterotetramer.</text>
</comment>
<comment type="subunit">
    <text evidence="1">Heterotetramer of two alpha and two epsilon subunits. The ACDS complex is made up of alpha, epsilon, beta, gamma and delta subunits with a probable stoichiometry of (alpha(2)epsilon(2))(4)-beta(8)-(gamma(1)delta(1))(8).</text>
</comment>
<comment type="domain">
    <text evidence="1">Cluster B is an all-cysteinyl-liganded 4Fe-4S cluster; cluster C is a mixed Ni-Fe-S cluster which is the active site of CO oxidation. Cluster D is also an all-cysteinyl-liganded 4Fe-4S cluster that bridges the two subunits of the CODH dimer. Contains two additional 4Fe-4S clusters, dubbed E and F, that probably transport electrons from ferredoxin to the B cluster.</text>
</comment>
<comment type="similarity">
    <text evidence="1">Belongs to the Ni-containing carbon monoxide dehydrogenase family.</text>
</comment>
<organism>
    <name type="scientific">Methanocaldococcus jannaschii (strain ATCC 43067 / DSM 2661 / JAL-1 / JCM 10045 / NBRC 100440)</name>
    <name type="common">Methanococcus jannaschii</name>
    <dbReference type="NCBI Taxonomy" id="243232"/>
    <lineage>
        <taxon>Archaea</taxon>
        <taxon>Methanobacteriati</taxon>
        <taxon>Methanobacteriota</taxon>
        <taxon>Methanomada group</taxon>
        <taxon>Methanococci</taxon>
        <taxon>Methanococcales</taxon>
        <taxon>Methanocaldococcaceae</taxon>
        <taxon>Methanocaldococcus</taxon>
    </lineage>
</organism>
<evidence type="ECO:0000255" key="1">
    <source>
        <dbReference type="HAMAP-Rule" id="MF_01137"/>
    </source>
</evidence>